<proteinExistence type="evidence at transcript level"/>
<evidence type="ECO:0000250" key="1"/>
<evidence type="ECO:0000255" key="2"/>
<evidence type="ECO:0000256" key="3">
    <source>
        <dbReference type="SAM" id="MobiDB-lite"/>
    </source>
</evidence>
<evidence type="ECO:0000303" key="4">
    <source>
    </source>
</evidence>
<evidence type="ECO:0000303" key="5">
    <source>
    </source>
</evidence>
<evidence type="ECO:0000305" key="6"/>
<evidence type="ECO:0000312" key="7">
    <source>
        <dbReference type="Araport" id="AT4G37810"/>
    </source>
</evidence>
<sequence>MVWSSNMSSFLLILLILNSTHFSLMANGRPEPDSVEFTKSGDQDVKMMMRGLIGSRPPRCERVRCRSCGHCEAIQVPTNPQTKLHSPLTTSSSSSSETIHLDYTRGDDSTNYKPMSWKCKCGNSIYNP</sequence>
<keyword id="KW-0217">Developmental protein</keyword>
<keyword id="KW-1015">Disulfide bond</keyword>
<keyword id="KW-1185">Reference proteome</keyword>
<keyword id="KW-0964">Secreted</keyword>
<keyword id="KW-0732">Signal</keyword>
<dbReference type="EMBL" id="AL035709">
    <property type="protein sequence ID" value="CAB38929.1"/>
    <property type="molecule type" value="Genomic_DNA"/>
</dbReference>
<dbReference type="EMBL" id="AL161592">
    <property type="protein sequence ID" value="CAB80446.1"/>
    <property type="molecule type" value="Genomic_DNA"/>
</dbReference>
<dbReference type="EMBL" id="CP002687">
    <property type="protein sequence ID" value="AEE86840.1"/>
    <property type="molecule type" value="Genomic_DNA"/>
</dbReference>
<dbReference type="PIR" id="T06028">
    <property type="entry name" value="T06028"/>
</dbReference>
<dbReference type="RefSeq" id="NP_680774.1">
    <property type="nucleotide sequence ID" value="NM_148408.3"/>
</dbReference>
<dbReference type="SMR" id="Q9T068"/>
<dbReference type="FunCoup" id="Q9T068">
    <property type="interactions" value="168"/>
</dbReference>
<dbReference type="STRING" id="3702.Q9T068"/>
<dbReference type="PaxDb" id="3702-AT4G37810.1"/>
<dbReference type="EnsemblPlants" id="AT4G37810.1">
    <property type="protein sequence ID" value="AT4G37810.1"/>
    <property type="gene ID" value="AT4G37810"/>
</dbReference>
<dbReference type="GeneID" id="829937"/>
<dbReference type="Gramene" id="AT4G37810.1">
    <property type="protein sequence ID" value="AT4G37810.1"/>
    <property type="gene ID" value="AT4G37810"/>
</dbReference>
<dbReference type="KEGG" id="ath:AT4G37810"/>
<dbReference type="Araport" id="AT4G37810"/>
<dbReference type="TAIR" id="AT4G37810">
    <property type="gene designation" value="ATEPFL2"/>
</dbReference>
<dbReference type="eggNOG" id="ENOG502S846">
    <property type="taxonomic scope" value="Eukaryota"/>
</dbReference>
<dbReference type="HOGENOM" id="CLU_135272_0_0_1"/>
<dbReference type="InParanoid" id="Q9T068"/>
<dbReference type="OMA" id="TQLRYKA"/>
<dbReference type="PhylomeDB" id="Q9T068"/>
<dbReference type="PRO" id="PR:Q9T068"/>
<dbReference type="Proteomes" id="UP000006548">
    <property type="component" value="Chromosome 4"/>
</dbReference>
<dbReference type="ExpressionAtlas" id="Q9T068">
    <property type="expression patterns" value="baseline and differential"/>
</dbReference>
<dbReference type="GO" id="GO:0005576">
    <property type="term" value="C:extracellular region"/>
    <property type="evidence" value="ECO:0007669"/>
    <property type="project" value="UniProtKB-SubCell"/>
</dbReference>
<dbReference type="GO" id="GO:0010052">
    <property type="term" value="P:guard cell differentiation"/>
    <property type="evidence" value="ECO:0000250"/>
    <property type="project" value="UniProtKB"/>
</dbReference>
<dbReference type="GO" id="GO:0010374">
    <property type="term" value="P:stomatal complex development"/>
    <property type="evidence" value="ECO:0000250"/>
    <property type="project" value="UniProtKB"/>
</dbReference>
<dbReference type="InterPro" id="IPR039455">
    <property type="entry name" value="EPFL"/>
</dbReference>
<dbReference type="PANTHER" id="PTHR33109:SF7">
    <property type="entry name" value="EPIDERMAL PATTERNING FACTOR-LIKE PROTEIN 2"/>
    <property type="match status" value="1"/>
</dbReference>
<dbReference type="PANTHER" id="PTHR33109">
    <property type="entry name" value="EPIDERMAL PATTERNING FACTOR-LIKE PROTEIN 4"/>
    <property type="match status" value="1"/>
</dbReference>
<dbReference type="Pfam" id="PF17181">
    <property type="entry name" value="EPF"/>
    <property type="match status" value="1"/>
</dbReference>
<organism>
    <name type="scientific">Arabidopsis thaliana</name>
    <name type="common">Mouse-ear cress</name>
    <dbReference type="NCBI Taxonomy" id="3702"/>
    <lineage>
        <taxon>Eukaryota</taxon>
        <taxon>Viridiplantae</taxon>
        <taxon>Streptophyta</taxon>
        <taxon>Embryophyta</taxon>
        <taxon>Tracheophyta</taxon>
        <taxon>Spermatophyta</taxon>
        <taxon>Magnoliopsida</taxon>
        <taxon>eudicotyledons</taxon>
        <taxon>Gunneridae</taxon>
        <taxon>Pentapetalae</taxon>
        <taxon>rosids</taxon>
        <taxon>malvids</taxon>
        <taxon>Brassicales</taxon>
        <taxon>Brassicaceae</taxon>
        <taxon>Camelineae</taxon>
        <taxon>Arabidopsis</taxon>
    </lineage>
</organism>
<comment type="function">
    <text evidence="1">Controls stomatal patterning.</text>
</comment>
<comment type="subcellular location">
    <subcellularLocation>
        <location evidence="6">Secreted</location>
    </subcellularLocation>
</comment>
<comment type="similarity">
    <text evidence="6">Belongs to the plant cysteine rich small secretory peptide family. Epidermal patterning factor subfamily.</text>
</comment>
<gene>
    <name evidence="4" type="primary">EPFL2</name>
    <name evidence="7" type="ordered locus">At4g37810</name>
    <name type="ORF">T28I19.4</name>
</gene>
<protein>
    <recommendedName>
        <fullName evidence="4">EPIDERMAL PATTERNING FACTOR-like protein 2</fullName>
        <shortName>EPF-like protein 2</shortName>
    </recommendedName>
    <component>
        <recommendedName>
            <fullName evidence="6">MEPFL2</fullName>
        </recommendedName>
    </component>
</protein>
<reference key="1">
    <citation type="journal article" date="1999" name="Nature">
        <title>Sequence and analysis of chromosome 4 of the plant Arabidopsis thaliana.</title>
        <authorList>
            <person name="Mayer K.F.X."/>
            <person name="Schueller C."/>
            <person name="Wambutt R."/>
            <person name="Murphy G."/>
            <person name="Volckaert G."/>
            <person name="Pohl T."/>
            <person name="Duesterhoeft A."/>
            <person name="Stiekema W."/>
            <person name="Entian K.-D."/>
            <person name="Terryn N."/>
            <person name="Harris B."/>
            <person name="Ansorge W."/>
            <person name="Brandt P."/>
            <person name="Grivell L.A."/>
            <person name="Rieger M."/>
            <person name="Weichselgartner M."/>
            <person name="de Simone V."/>
            <person name="Obermaier B."/>
            <person name="Mache R."/>
            <person name="Mueller M."/>
            <person name="Kreis M."/>
            <person name="Delseny M."/>
            <person name="Puigdomenech P."/>
            <person name="Watson M."/>
            <person name="Schmidtheini T."/>
            <person name="Reichert B."/>
            <person name="Portetelle D."/>
            <person name="Perez-Alonso M."/>
            <person name="Boutry M."/>
            <person name="Bancroft I."/>
            <person name="Vos P."/>
            <person name="Hoheisel J."/>
            <person name="Zimmermann W."/>
            <person name="Wedler H."/>
            <person name="Ridley P."/>
            <person name="Langham S.-A."/>
            <person name="McCullagh B."/>
            <person name="Bilham L."/>
            <person name="Robben J."/>
            <person name="van der Schueren J."/>
            <person name="Grymonprez B."/>
            <person name="Chuang Y.-J."/>
            <person name="Vandenbussche F."/>
            <person name="Braeken M."/>
            <person name="Weltjens I."/>
            <person name="Voet M."/>
            <person name="Bastiaens I."/>
            <person name="Aert R."/>
            <person name="Defoor E."/>
            <person name="Weitzenegger T."/>
            <person name="Bothe G."/>
            <person name="Ramsperger U."/>
            <person name="Hilbert H."/>
            <person name="Braun M."/>
            <person name="Holzer E."/>
            <person name="Brandt A."/>
            <person name="Peters S."/>
            <person name="van Staveren M."/>
            <person name="Dirkse W."/>
            <person name="Mooijman P."/>
            <person name="Klein Lankhorst R."/>
            <person name="Rose M."/>
            <person name="Hauf J."/>
            <person name="Koetter P."/>
            <person name="Berneiser S."/>
            <person name="Hempel S."/>
            <person name="Feldpausch M."/>
            <person name="Lamberth S."/>
            <person name="Van den Daele H."/>
            <person name="De Keyser A."/>
            <person name="Buysshaert C."/>
            <person name="Gielen J."/>
            <person name="Villarroel R."/>
            <person name="De Clercq R."/>
            <person name="van Montagu M."/>
            <person name="Rogers J."/>
            <person name="Cronin A."/>
            <person name="Quail M.A."/>
            <person name="Bray-Allen S."/>
            <person name="Clark L."/>
            <person name="Doggett J."/>
            <person name="Hall S."/>
            <person name="Kay M."/>
            <person name="Lennard N."/>
            <person name="McLay K."/>
            <person name="Mayes R."/>
            <person name="Pettett A."/>
            <person name="Rajandream M.A."/>
            <person name="Lyne M."/>
            <person name="Benes V."/>
            <person name="Rechmann S."/>
            <person name="Borkova D."/>
            <person name="Bloecker H."/>
            <person name="Scharfe M."/>
            <person name="Grimm M."/>
            <person name="Loehnert T.-H."/>
            <person name="Dose S."/>
            <person name="de Haan M."/>
            <person name="Maarse A.C."/>
            <person name="Schaefer M."/>
            <person name="Mueller-Auer S."/>
            <person name="Gabel C."/>
            <person name="Fuchs M."/>
            <person name="Fartmann B."/>
            <person name="Granderath K."/>
            <person name="Dauner D."/>
            <person name="Herzl A."/>
            <person name="Neumann S."/>
            <person name="Argiriou A."/>
            <person name="Vitale D."/>
            <person name="Liguori R."/>
            <person name="Piravandi E."/>
            <person name="Massenet O."/>
            <person name="Quigley F."/>
            <person name="Clabauld G."/>
            <person name="Muendlein A."/>
            <person name="Felber R."/>
            <person name="Schnabl S."/>
            <person name="Hiller R."/>
            <person name="Schmidt W."/>
            <person name="Lecharny A."/>
            <person name="Aubourg S."/>
            <person name="Chefdor F."/>
            <person name="Cooke R."/>
            <person name="Berger C."/>
            <person name="Monfort A."/>
            <person name="Casacuberta E."/>
            <person name="Gibbons T."/>
            <person name="Weber N."/>
            <person name="Vandenbol M."/>
            <person name="Bargues M."/>
            <person name="Terol J."/>
            <person name="Torres A."/>
            <person name="Perez-Perez A."/>
            <person name="Purnelle B."/>
            <person name="Bent E."/>
            <person name="Johnson S."/>
            <person name="Tacon D."/>
            <person name="Jesse T."/>
            <person name="Heijnen L."/>
            <person name="Schwarz S."/>
            <person name="Scholler P."/>
            <person name="Heber S."/>
            <person name="Francs P."/>
            <person name="Bielke C."/>
            <person name="Frishman D."/>
            <person name="Haase D."/>
            <person name="Lemcke K."/>
            <person name="Mewes H.-W."/>
            <person name="Stocker S."/>
            <person name="Zaccaria P."/>
            <person name="Bevan M."/>
            <person name="Wilson R.K."/>
            <person name="de la Bastide M."/>
            <person name="Habermann K."/>
            <person name="Parnell L."/>
            <person name="Dedhia N."/>
            <person name="Gnoj L."/>
            <person name="Schutz K."/>
            <person name="Huang E."/>
            <person name="Spiegel L."/>
            <person name="Sekhon M."/>
            <person name="Murray J."/>
            <person name="Sheet P."/>
            <person name="Cordes M."/>
            <person name="Abu-Threideh J."/>
            <person name="Stoneking T."/>
            <person name="Kalicki J."/>
            <person name="Graves T."/>
            <person name="Harmon G."/>
            <person name="Edwards J."/>
            <person name="Latreille P."/>
            <person name="Courtney L."/>
            <person name="Cloud J."/>
            <person name="Abbott A."/>
            <person name="Scott K."/>
            <person name="Johnson D."/>
            <person name="Minx P."/>
            <person name="Bentley D."/>
            <person name="Fulton B."/>
            <person name="Miller N."/>
            <person name="Greco T."/>
            <person name="Kemp K."/>
            <person name="Kramer J."/>
            <person name="Fulton L."/>
            <person name="Mardis E."/>
            <person name="Dante M."/>
            <person name="Pepin K."/>
            <person name="Hillier L.W."/>
            <person name="Nelson J."/>
            <person name="Spieth J."/>
            <person name="Ryan E."/>
            <person name="Andrews S."/>
            <person name="Geisel C."/>
            <person name="Layman D."/>
            <person name="Du H."/>
            <person name="Ali J."/>
            <person name="Berghoff A."/>
            <person name="Jones K."/>
            <person name="Drone K."/>
            <person name="Cotton M."/>
            <person name="Joshu C."/>
            <person name="Antonoiu B."/>
            <person name="Zidanic M."/>
            <person name="Strong C."/>
            <person name="Sun H."/>
            <person name="Lamar B."/>
            <person name="Yordan C."/>
            <person name="Ma P."/>
            <person name="Zhong J."/>
            <person name="Preston R."/>
            <person name="Vil D."/>
            <person name="Shekher M."/>
            <person name="Matero A."/>
            <person name="Shah R."/>
            <person name="Swaby I.K."/>
            <person name="O'Shaughnessy A."/>
            <person name="Rodriguez M."/>
            <person name="Hoffman J."/>
            <person name="Till S."/>
            <person name="Granat S."/>
            <person name="Shohdy N."/>
            <person name="Hasegawa A."/>
            <person name="Hameed A."/>
            <person name="Lodhi M."/>
            <person name="Johnson A."/>
            <person name="Chen E."/>
            <person name="Marra M.A."/>
            <person name="Martienssen R."/>
            <person name="McCombie W.R."/>
        </authorList>
    </citation>
    <scope>NUCLEOTIDE SEQUENCE [LARGE SCALE GENOMIC DNA]</scope>
    <source>
        <strain>cv. Columbia</strain>
    </source>
</reference>
<reference key="2">
    <citation type="journal article" date="2017" name="Plant J.">
        <title>Araport11: a complete reannotation of the Arabidopsis thaliana reference genome.</title>
        <authorList>
            <person name="Cheng C.Y."/>
            <person name="Krishnakumar V."/>
            <person name="Chan A.P."/>
            <person name="Thibaud-Nissen F."/>
            <person name="Schobel S."/>
            <person name="Town C.D."/>
        </authorList>
    </citation>
    <scope>GENOME REANNOTATION</scope>
    <source>
        <strain>cv. Columbia</strain>
    </source>
</reference>
<reference key="3">
    <citation type="journal article" date="2009" name="Plant Cell Physiol.">
        <title>Epidermal cell density is autoregulated via a secretory peptide, EPIDERMAL PATTERNING FACTOR 2 in Arabidopsis leaves.</title>
        <authorList>
            <person name="Hara K."/>
            <person name="Yokoo T."/>
            <person name="Kajita R."/>
            <person name="Onishi T."/>
            <person name="Yahata S."/>
            <person name="Peterson K.M."/>
            <person name="Torii K.U."/>
            <person name="Kakimoto T."/>
        </authorList>
    </citation>
    <scope>GENE FAMILY</scope>
    <scope>NOMENCLATURE</scope>
</reference>
<reference key="4">
    <citation type="journal article" date="2011" name="Nat. Commun.">
        <title>The NMR structure of stomagen reveals the basis of stomatal density regulation by plant peptide hormones.</title>
        <authorList>
            <person name="Ohki S."/>
            <person name="Takeuchi M."/>
            <person name="Mori M."/>
        </authorList>
    </citation>
    <scope>3D-STRUCTURE MODELING</scope>
    <scope>DISULFIDE BOND</scope>
</reference>
<name>EPFL2_ARATH</name>
<feature type="signal peptide" evidence="2">
    <location>
        <begin position="1"/>
        <end position="28"/>
    </location>
</feature>
<feature type="chain" id="PRO_0000392500" description="EPIDERMAL PATTERNING FACTOR-like protein 2">
    <location>
        <begin position="29"/>
        <end position="128"/>
    </location>
</feature>
<feature type="chain" id="PRO_0000430508" description="MEPFL2" evidence="5">
    <location>
        <begin position="53"/>
        <end position="128"/>
    </location>
</feature>
<feature type="region of interest" description="Disordered" evidence="3">
    <location>
        <begin position="79"/>
        <end position="100"/>
    </location>
</feature>
<feature type="compositionally biased region" description="Polar residues" evidence="3">
    <location>
        <begin position="79"/>
        <end position="90"/>
    </location>
</feature>
<feature type="disulfide bond" evidence="5">
    <location>
        <begin position="60"/>
        <end position="119"/>
    </location>
</feature>
<feature type="disulfide bond" evidence="5">
    <location>
        <begin position="65"/>
        <end position="71"/>
    </location>
</feature>
<feature type="disulfide bond" evidence="5">
    <location>
        <begin position="68"/>
        <end position="121"/>
    </location>
</feature>
<accession>Q9T068</accession>